<proteinExistence type="inferred from homology"/>
<reference key="1">
    <citation type="journal article" date="2009" name="PLoS Genet.">
        <title>Organised genome dynamics in the Escherichia coli species results in highly diverse adaptive paths.</title>
        <authorList>
            <person name="Touchon M."/>
            <person name="Hoede C."/>
            <person name="Tenaillon O."/>
            <person name="Barbe V."/>
            <person name="Baeriswyl S."/>
            <person name="Bidet P."/>
            <person name="Bingen E."/>
            <person name="Bonacorsi S."/>
            <person name="Bouchier C."/>
            <person name="Bouvet O."/>
            <person name="Calteau A."/>
            <person name="Chiapello H."/>
            <person name="Clermont O."/>
            <person name="Cruveiller S."/>
            <person name="Danchin A."/>
            <person name="Diard M."/>
            <person name="Dossat C."/>
            <person name="Karoui M.E."/>
            <person name="Frapy E."/>
            <person name="Garry L."/>
            <person name="Ghigo J.M."/>
            <person name="Gilles A.M."/>
            <person name="Johnson J."/>
            <person name="Le Bouguenec C."/>
            <person name="Lescat M."/>
            <person name="Mangenot S."/>
            <person name="Martinez-Jehanne V."/>
            <person name="Matic I."/>
            <person name="Nassif X."/>
            <person name="Oztas S."/>
            <person name="Petit M.A."/>
            <person name="Pichon C."/>
            <person name="Rouy Z."/>
            <person name="Ruf C.S."/>
            <person name="Schneider D."/>
            <person name="Tourret J."/>
            <person name="Vacherie B."/>
            <person name="Vallenet D."/>
            <person name="Medigue C."/>
            <person name="Rocha E.P.C."/>
            <person name="Denamur E."/>
        </authorList>
    </citation>
    <scope>NUCLEOTIDE SEQUENCE [LARGE SCALE GENOMIC DNA]</scope>
    <source>
        <strain>UMN026 / ExPEC</strain>
    </source>
</reference>
<organism>
    <name type="scientific">Escherichia coli O17:K52:H18 (strain UMN026 / ExPEC)</name>
    <dbReference type="NCBI Taxonomy" id="585056"/>
    <lineage>
        <taxon>Bacteria</taxon>
        <taxon>Pseudomonadati</taxon>
        <taxon>Pseudomonadota</taxon>
        <taxon>Gammaproteobacteria</taxon>
        <taxon>Enterobacterales</taxon>
        <taxon>Enterobacteriaceae</taxon>
        <taxon>Escherichia</taxon>
    </lineage>
</organism>
<gene>
    <name evidence="1" type="primary">yacL</name>
    <name type="ordered locus">ECUMN_0116</name>
</gene>
<sequence length="120" mass="13942">MDYEFLRDITGVVKVRMSMGHEVVGHWFNEEVKENLALLDEVEQAAHALKGSERSWQRAGHEYTLWMDGEEVMVRANQLEFAGDEMEEGMNYYDEESLSLCGVEDFLQVVAAYRNFVQQK</sequence>
<evidence type="ECO:0000255" key="1">
    <source>
        <dbReference type="HAMAP-Rule" id="MF_01053"/>
    </source>
</evidence>
<name>YACL_ECOLU</name>
<accession>B7N7Y9</accession>
<comment type="similarity">
    <text evidence="1">Belongs to the UPF0231 family.</text>
</comment>
<dbReference type="EMBL" id="CU928163">
    <property type="protein sequence ID" value="CAR11339.1"/>
    <property type="molecule type" value="Genomic_DNA"/>
</dbReference>
<dbReference type="RefSeq" id="WP_000384306.1">
    <property type="nucleotide sequence ID" value="NC_011751.1"/>
</dbReference>
<dbReference type="RefSeq" id="YP_002410895.1">
    <property type="nucleotide sequence ID" value="NC_011751.1"/>
</dbReference>
<dbReference type="STRING" id="585056.ECUMN_0116"/>
<dbReference type="GeneID" id="93777317"/>
<dbReference type="KEGG" id="eum:ECUMN_0116"/>
<dbReference type="PATRIC" id="fig|585056.7.peg.308"/>
<dbReference type="HOGENOM" id="CLU_139226_0_0_6"/>
<dbReference type="Proteomes" id="UP000007097">
    <property type="component" value="Chromosome"/>
</dbReference>
<dbReference type="HAMAP" id="MF_01053">
    <property type="entry name" value="UPF0231"/>
    <property type="match status" value="1"/>
</dbReference>
<dbReference type="InterPro" id="IPR008249">
    <property type="entry name" value="UPF0231"/>
</dbReference>
<dbReference type="NCBIfam" id="NF003574">
    <property type="entry name" value="PRK05248.1-1"/>
    <property type="match status" value="1"/>
</dbReference>
<dbReference type="NCBIfam" id="NF003576">
    <property type="entry name" value="PRK05248.1-3"/>
    <property type="match status" value="1"/>
</dbReference>
<dbReference type="Pfam" id="PF06062">
    <property type="entry name" value="UPF0231"/>
    <property type="match status" value="1"/>
</dbReference>
<dbReference type="PIRSF" id="PIRSF006287">
    <property type="entry name" value="UCP006287"/>
    <property type="match status" value="1"/>
</dbReference>
<feature type="chain" id="PRO_1000136294" description="UPF0231 protein YacL">
    <location>
        <begin position="1"/>
        <end position="120"/>
    </location>
</feature>
<protein>
    <recommendedName>
        <fullName evidence="1">UPF0231 protein YacL</fullName>
    </recommendedName>
</protein>